<name>GPMA_XANP2</name>
<feature type="chain" id="PRO_1000135993" description="2,3-bisphosphoglycerate-dependent phosphoglycerate mutase">
    <location>
        <begin position="1"/>
        <end position="207"/>
    </location>
</feature>
<feature type="active site" description="Tele-phosphohistidine intermediate" evidence="1">
    <location>
        <position position="11"/>
    </location>
</feature>
<feature type="active site" description="Proton donor/acceptor" evidence="1">
    <location>
        <position position="89"/>
    </location>
</feature>
<feature type="binding site" evidence="1">
    <location>
        <begin position="10"/>
        <end position="17"/>
    </location>
    <ligand>
        <name>substrate</name>
    </ligand>
</feature>
<feature type="binding site" evidence="1">
    <location>
        <begin position="23"/>
        <end position="24"/>
    </location>
    <ligand>
        <name>substrate</name>
    </ligand>
</feature>
<feature type="binding site" evidence="1">
    <location>
        <position position="62"/>
    </location>
    <ligand>
        <name>substrate</name>
    </ligand>
</feature>
<feature type="binding site" evidence="1">
    <location>
        <begin position="89"/>
        <end position="92"/>
    </location>
    <ligand>
        <name>substrate</name>
    </ligand>
</feature>
<feature type="binding site" evidence="1">
    <location>
        <position position="100"/>
    </location>
    <ligand>
        <name>substrate</name>
    </ligand>
</feature>
<feature type="binding site" evidence="1">
    <location>
        <begin position="116"/>
        <end position="117"/>
    </location>
    <ligand>
        <name>substrate</name>
    </ligand>
</feature>
<feature type="binding site" evidence="1">
    <location>
        <begin position="160"/>
        <end position="161"/>
    </location>
    <ligand>
        <name>substrate</name>
    </ligand>
</feature>
<feature type="site" description="Transition state stabilizer" evidence="1">
    <location>
        <position position="159"/>
    </location>
</feature>
<sequence>MSDRILVLVRHGQSEWNLKNLFTGWRDPDLTEQGVSEAKRAGALLKAEGLKFDVAFTSDLTRAQKTLGLILGEMGQEGVPTTRNVALNERDYGDLAGLNKDDARAKWGDDQVHIWRRSYDIAPPGGESLRDTVARTLPYYVQEILPCVLRGQTTLVAAHGNSLRALIMTLEKLSPEGIMKRELNTGAPIVYKLAADSTVAEKRDLVA</sequence>
<keyword id="KW-0312">Gluconeogenesis</keyword>
<keyword id="KW-0324">Glycolysis</keyword>
<keyword id="KW-0413">Isomerase</keyword>
<keyword id="KW-1185">Reference proteome</keyword>
<evidence type="ECO:0000255" key="1">
    <source>
        <dbReference type="HAMAP-Rule" id="MF_01039"/>
    </source>
</evidence>
<dbReference type="EC" id="5.4.2.11" evidence="1"/>
<dbReference type="EMBL" id="CP000781">
    <property type="protein sequence ID" value="ABS65618.1"/>
    <property type="molecule type" value="Genomic_DNA"/>
</dbReference>
<dbReference type="SMR" id="A7IC75"/>
<dbReference type="STRING" id="78245.Xaut_0360"/>
<dbReference type="KEGG" id="xau:Xaut_0360"/>
<dbReference type="eggNOG" id="COG0588">
    <property type="taxonomic scope" value="Bacteria"/>
</dbReference>
<dbReference type="HOGENOM" id="CLU_033323_1_4_5"/>
<dbReference type="OrthoDB" id="9781415at2"/>
<dbReference type="PhylomeDB" id="A7IC75"/>
<dbReference type="UniPathway" id="UPA00109">
    <property type="reaction ID" value="UER00186"/>
</dbReference>
<dbReference type="Proteomes" id="UP000002417">
    <property type="component" value="Chromosome"/>
</dbReference>
<dbReference type="GO" id="GO:0004619">
    <property type="term" value="F:phosphoglycerate mutase activity"/>
    <property type="evidence" value="ECO:0007669"/>
    <property type="project" value="UniProtKB-EC"/>
</dbReference>
<dbReference type="GO" id="GO:0006094">
    <property type="term" value="P:gluconeogenesis"/>
    <property type="evidence" value="ECO:0007669"/>
    <property type="project" value="UniProtKB-UniRule"/>
</dbReference>
<dbReference type="GO" id="GO:0006096">
    <property type="term" value="P:glycolytic process"/>
    <property type="evidence" value="ECO:0007669"/>
    <property type="project" value="UniProtKB-UniRule"/>
</dbReference>
<dbReference type="CDD" id="cd07067">
    <property type="entry name" value="HP_PGM_like"/>
    <property type="match status" value="1"/>
</dbReference>
<dbReference type="Gene3D" id="3.40.50.1240">
    <property type="entry name" value="Phosphoglycerate mutase-like"/>
    <property type="match status" value="1"/>
</dbReference>
<dbReference type="HAMAP" id="MF_01039">
    <property type="entry name" value="PGAM_GpmA"/>
    <property type="match status" value="1"/>
</dbReference>
<dbReference type="InterPro" id="IPR013078">
    <property type="entry name" value="His_Pase_superF_clade-1"/>
</dbReference>
<dbReference type="InterPro" id="IPR029033">
    <property type="entry name" value="His_PPase_superfam"/>
</dbReference>
<dbReference type="InterPro" id="IPR001345">
    <property type="entry name" value="PG/BPGM_mutase_AS"/>
</dbReference>
<dbReference type="InterPro" id="IPR005952">
    <property type="entry name" value="Phosphogly_mut1"/>
</dbReference>
<dbReference type="NCBIfam" id="TIGR01258">
    <property type="entry name" value="pgm_1"/>
    <property type="match status" value="1"/>
</dbReference>
<dbReference type="NCBIfam" id="NF002339">
    <property type="entry name" value="PRK01295.1"/>
    <property type="match status" value="1"/>
</dbReference>
<dbReference type="PANTHER" id="PTHR11931">
    <property type="entry name" value="PHOSPHOGLYCERATE MUTASE"/>
    <property type="match status" value="1"/>
</dbReference>
<dbReference type="Pfam" id="PF00300">
    <property type="entry name" value="His_Phos_1"/>
    <property type="match status" value="1"/>
</dbReference>
<dbReference type="SMART" id="SM00855">
    <property type="entry name" value="PGAM"/>
    <property type="match status" value="1"/>
</dbReference>
<dbReference type="SUPFAM" id="SSF53254">
    <property type="entry name" value="Phosphoglycerate mutase-like"/>
    <property type="match status" value="1"/>
</dbReference>
<dbReference type="PROSITE" id="PS00175">
    <property type="entry name" value="PG_MUTASE"/>
    <property type="match status" value="1"/>
</dbReference>
<comment type="function">
    <text evidence="1">Catalyzes the interconversion of 2-phosphoglycerate and 3-phosphoglycerate.</text>
</comment>
<comment type="catalytic activity">
    <reaction evidence="1">
        <text>(2R)-2-phosphoglycerate = (2R)-3-phosphoglycerate</text>
        <dbReference type="Rhea" id="RHEA:15901"/>
        <dbReference type="ChEBI" id="CHEBI:58272"/>
        <dbReference type="ChEBI" id="CHEBI:58289"/>
        <dbReference type="EC" id="5.4.2.11"/>
    </reaction>
</comment>
<comment type="pathway">
    <text evidence="1">Carbohydrate degradation; glycolysis; pyruvate from D-glyceraldehyde 3-phosphate: step 3/5.</text>
</comment>
<comment type="subunit">
    <text evidence="1">Homodimer.</text>
</comment>
<comment type="similarity">
    <text evidence="1">Belongs to the phosphoglycerate mutase family. BPG-dependent PGAM subfamily.</text>
</comment>
<organism>
    <name type="scientific">Xanthobacter autotrophicus (strain ATCC BAA-1158 / Py2)</name>
    <dbReference type="NCBI Taxonomy" id="78245"/>
    <lineage>
        <taxon>Bacteria</taxon>
        <taxon>Pseudomonadati</taxon>
        <taxon>Pseudomonadota</taxon>
        <taxon>Alphaproteobacteria</taxon>
        <taxon>Hyphomicrobiales</taxon>
        <taxon>Xanthobacteraceae</taxon>
        <taxon>Xanthobacter</taxon>
    </lineage>
</organism>
<reference key="1">
    <citation type="submission" date="2007-07" db="EMBL/GenBank/DDBJ databases">
        <title>Complete sequence of chromosome of Xanthobacter autotrophicus Py2.</title>
        <authorList>
            <consortium name="US DOE Joint Genome Institute"/>
            <person name="Copeland A."/>
            <person name="Lucas S."/>
            <person name="Lapidus A."/>
            <person name="Barry K."/>
            <person name="Glavina del Rio T."/>
            <person name="Hammon N."/>
            <person name="Israni S."/>
            <person name="Dalin E."/>
            <person name="Tice H."/>
            <person name="Pitluck S."/>
            <person name="Sims D."/>
            <person name="Brettin T."/>
            <person name="Bruce D."/>
            <person name="Detter J.C."/>
            <person name="Han C."/>
            <person name="Tapia R."/>
            <person name="Brainard J."/>
            <person name="Schmutz J."/>
            <person name="Larimer F."/>
            <person name="Land M."/>
            <person name="Hauser L."/>
            <person name="Kyrpides N."/>
            <person name="Kim E."/>
            <person name="Ensigns S.A."/>
            <person name="Richardson P."/>
        </authorList>
    </citation>
    <scope>NUCLEOTIDE SEQUENCE [LARGE SCALE GENOMIC DNA]</scope>
    <source>
        <strain>ATCC BAA-1158 / Py2</strain>
    </source>
</reference>
<proteinExistence type="inferred from homology"/>
<gene>
    <name evidence="1" type="primary">gpmA</name>
    <name type="ordered locus">Xaut_0360</name>
</gene>
<accession>A7IC75</accession>
<protein>
    <recommendedName>
        <fullName evidence="1">2,3-bisphosphoglycerate-dependent phosphoglycerate mutase</fullName>
        <shortName evidence="1">BPG-dependent PGAM</shortName>
        <shortName evidence="1">PGAM</shortName>
        <shortName evidence="1">Phosphoglyceromutase</shortName>
        <shortName evidence="1">dPGM</shortName>
        <ecNumber evidence="1">5.4.2.11</ecNumber>
    </recommendedName>
</protein>